<proteinExistence type="inferred from homology"/>
<reference key="1">
    <citation type="journal article" date="1994" name="Virology">
        <title>Comparison of VP4 and VP7 of five murine rotavirus strains.</title>
        <authorList>
            <person name="Dunn S.J."/>
            <person name="Burns J.W."/>
            <person name="Cross T.L."/>
            <person name="Vo P.T."/>
            <person name="Ward R.L."/>
            <person name="Bremont M."/>
            <person name="Greenberg H.B."/>
        </authorList>
    </citation>
    <scope>NUCLEOTIDE SEQUENCE [GENOMIC RNA]</scope>
</reference>
<feature type="chain" id="PRO_0000368122" description="Outer capsid protein VP4" evidence="1">
    <location>
        <begin position="1"/>
        <end position="776"/>
    </location>
</feature>
<feature type="chain" id="PRO_0000368123" description="Outer capsid protein VP8*" evidence="1">
    <location>
        <begin position="1"/>
        <end position="231"/>
    </location>
</feature>
<feature type="chain" id="PRO_0000368124" description="Outer capsid protein VP5*" evidence="1">
    <location>
        <begin position="248"/>
        <end position="776"/>
    </location>
</feature>
<feature type="region of interest" description="Spike head" evidence="1">
    <location>
        <begin position="65"/>
        <end position="224"/>
    </location>
</feature>
<feature type="region of interest" description="Spike body and stalk (antigen domain)" evidence="1">
    <location>
        <begin position="248"/>
        <end position="479"/>
    </location>
</feature>
<feature type="region of interest" description="Hydrophobic; possible role in virus entry into host cell" evidence="1">
    <location>
        <begin position="389"/>
        <end position="409"/>
    </location>
</feature>
<feature type="region of interest" description="Spike foot" evidence="1">
    <location>
        <begin position="510"/>
        <end position="776"/>
    </location>
</feature>
<feature type="coiled-coil region" evidence="1">
    <location>
        <begin position="484"/>
        <end position="511"/>
    </location>
</feature>
<feature type="short sequence motif" description="DGE motif; interaction with ITGA2/ITGB1 heterodimer" evidence="1">
    <location>
        <begin position="308"/>
        <end position="310"/>
    </location>
</feature>
<feature type="short sequence motif" description="YGL motif; interaction with ITGA4" evidence="1">
    <location>
        <begin position="448"/>
        <end position="450"/>
    </location>
</feature>
<feature type="short sequence motif" description="KID motif; interaction with HSPA8" evidence="1">
    <location>
        <begin position="644"/>
        <end position="646"/>
    </location>
</feature>
<feature type="site" description="Cleavage" evidence="1">
    <location>
        <begin position="231"/>
        <end position="232"/>
    </location>
</feature>
<feature type="site" description="Cleavage" evidence="1">
    <location>
        <begin position="241"/>
        <end position="242"/>
    </location>
</feature>
<feature type="site" description="Cleavage; associated with enhancement of infectivity" evidence="1">
    <location>
        <begin position="247"/>
        <end position="248"/>
    </location>
</feature>
<feature type="disulfide bond" evidence="1">
    <location>
        <begin position="203"/>
        <end position="216"/>
    </location>
</feature>
<feature type="disulfide bond" evidence="1">
    <location>
        <begin position="318"/>
        <end position="380"/>
    </location>
</feature>
<dbReference type="EMBL" id="U08424">
    <property type="protein sequence ID" value="AAA50487.1"/>
    <property type="molecule type" value="Genomic_RNA"/>
</dbReference>
<dbReference type="SMR" id="Q83445"/>
<dbReference type="GO" id="GO:0044172">
    <property type="term" value="C:host cell endoplasmic reticulum-Golgi intermediate compartment"/>
    <property type="evidence" value="ECO:0007669"/>
    <property type="project" value="UniProtKB-SubCell"/>
</dbReference>
<dbReference type="GO" id="GO:0020002">
    <property type="term" value="C:host cell plasma membrane"/>
    <property type="evidence" value="ECO:0007669"/>
    <property type="project" value="UniProtKB-SubCell"/>
</dbReference>
<dbReference type="GO" id="GO:0044168">
    <property type="term" value="C:host cell rough endoplasmic reticulum"/>
    <property type="evidence" value="ECO:0007669"/>
    <property type="project" value="UniProtKB-SubCell"/>
</dbReference>
<dbReference type="GO" id="GO:0044163">
    <property type="term" value="C:host cytoskeleton"/>
    <property type="evidence" value="ECO:0007669"/>
    <property type="project" value="UniProtKB-SubCell"/>
</dbReference>
<dbReference type="GO" id="GO:0016020">
    <property type="term" value="C:membrane"/>
    <property type="evidence" value="ECO:0007669"/>
    <property type="project" value="UniProtKB-KW"/>
</dbReference>
<dbReference type="GO" id="GO:0039624">
    <property type="term" value="C:viral outer capsid"/>
    <property type="evidence" value="ECO:0007669"/>
    <property type="project" value="UniProtKB-UniRule"/>
</dbReference>
<dbReference type="GO" id="GO:0039665">
    <property type="term" value="P:permeabilization of host organelle membrane involved in viral entry into host cell"/>
    <property type="evidence" value="ECO:0007669"/>
    <property type="project" value="UniProtKB-UniRule"/>
</dbReference>
<dbReference type="GO" id="GO:0019062">
    <property type="term" value="P:virion attachment to host cell"/>
    <property type="evidence" value="ECO:0007669"/>
    <property type="project" value="UniProtKB-UniRule"/>
</dbReference>
<dbReference type="Gene3D" id="1.20.5.170">
    <property type="match status" value="1"/>
</dbReference>
<dbReference type="Gene3D" id="2.60.120.200">
    <property type="match status" value="1"/>
</dbReference>
<dbReference type="HAMAP" id="MF_04132">
    <property type="entry name" value="Rota_A_VP4"/>
    <property type="match status" value="1"/>
</dbReference>
<dbReference type="HAMAP" id="MF_04125">
    <property type="entry name" value="Rota_VP4"/>
    <property type="match status" value="1"/>
</dbReference>
<dbReference type="InterPro" id="IPR013320">
    <property type="entry name" value="ConA-like_dom_sf"/>
</dbReference>
<dbReference type="InterPro" id="IPR042546">
    <property type="entry name" value="Rota_A_VP4"/>
</dbReference>
<dbReference type="InterPro" id="IPR035330">
    <property type="entry name" value="Rota_VP4_MID"/>
</dbReference>
<dbReference type="InterPro" id="IPR038017">
    <property type="entry name" value="Rota_VP4_MID_sf"/>
</dbReference>
<dbReference type="InterPro" id="IPR000416">
    <property type="entry name" value="VP4_concanavalin-like"/>
</dbReference>
<dbReference type="InterPro" id="IPR035329">
    <property type="entry name" value="VP4_helical"/>
</dbReference>
<dbReference type="Pfam" id="PF17477">
    <property type="entry name" value="Rota_VP4_MID"/>
    <property type="match status" value="1"/>
</dbReference>
<dbReference type="Pfam" id="PF00426">
    <property type="entry name" value="VP4_haemagglut"/>
    <property type="match status" value="1"/>
</dbReference>
<dbReference type="Pfam" id="PF17478">
    <property type="entry name" value="VP4_helical"/>
    <property type="match status" value="1"/>
</dbReference>
<dbReference type="SUPFAM" id="SSF49899">
    <property type="entry name" value="Concanavalin A-like lectins/glucanases"/>
    <property type="match status" value="1"/>
</dbReference>
<dbReference type="SUPFAM" id="SSF111379">
    <property type="entry name" value="VP4 membrane interaction domain"/>
    <property type="match status" value="1"/>
</dbReference>
<evidence type="ECO:0000255" key="1">
    <source>
        <dbReference type="HAMAP-Rule" id="MF_04132"/>
    </source>
</evidence>
<keyword id="KW-0167">Capsid protein</keyword>
<keyword id="KW-0175">Coiled coil</keyword>
<keyword id="KW-1015">Disulfide bond</keyword>
<keyword id="KW-0348">Hemagglutinin</keyword>
<keyword id="KW-1032">Host cell membrane</keyword>
<keyword id="KW-1035">Host cytoplasm</keyword>
<keyword id="KW-1037">Host cytoskeleton</keyword>
<keyword id="KW-1038">Host endoplasmic reticulum</keyword>
<keyword id="KW-1043">Host membrane</keyword>
<keyword id="KW-0945">Host-virus interaction</keyword>
<keyword id="KW-0472">Membrane</keyword>
<keyword id="KW-1152">Outer capsid protein</keyword>
<keyword id="KW-1161">Viral attachment to host cell</keyword>
<keyword id="KW-1162">Viral penetration into host cytoplasm</keyword>
<keyword id="KW-1173">Viral penetration via permeabilization of host membrane</keyword>
<keyword id="KW-0946">Virion</keyword>
<keyword id="KW-1160">Virus entry into host cell</keyword>
<organism>
    <name type="scientific">Rotavirus A (isolate RVA/Mouse/Brazil/EHP/1981/G16P[20])</name>
    <name type="common">RV-A</name>
    <dbReference type="NCBI Taxonomy" id="578840"/>
    <lineage>
        <taxon>Viruses</taxon>
        <taxon>Riboviria</taxon>
        <taxon>Orthornavirae</taxon>
        <taxon>Duplornaviricota</taxon>
        <taxon>Resentoviricetes</taxon>
        <taxon>Reovirales</taxon>
        <taxon>Sedoreoviridae</taxon>
        <taxon>Rotavirus</taxon>
        <taxon>Rotavirus A</taxon>
    </lineage>
</organism>
<protein>
    <recommendedName>
        <fullName evidence="1">Outer capsid protein VP4</fullName>
    </recommendedName>
    <alternativeName>
        <fullName evidence="1">Hemagglutinin</fullName>
    </alternativeName>
    <component>
        <recommendedName>
            <fullName evidence="1">Outer capsid protein VP8*</fullName>
        </recommendedName>
    </component>
    <component>
        <recommendedName>
            <fullName evidence="1">Outer capsid protein VP5*</fullName>
        </recommendedName>
    </component>
</protein>
<name>VP4_ROTME</name>
<sequence length="776" mass="86871">MASLIYRQLLTNSFTVDLSDEIETIGSEKNQNVTINPGPFAQIGYAPVDWGPGETNDSTTVEPVLDGPYKPTSFNPPTDYWMLLSPSSPGAVVEGTNNTDRWLATILIEPNVASTTRTYTIFGSKEAITVENTSQNKWKFIDLAKTSLTGSYSQYGILLSKPKLYAIMKRSGYLYTYSGETPDAITDYYTTTNYDSVNMTAYCDFYIIPWAQEALCTQYINNGLPPIQNTRNVVARPLSSRSIVVRRAQANEDVVISKASLWKEMQYNRDITIRFKFANAIIKSGGLGYKWSEISFKPANYQYTYTRDGEEVTAHTTCSVNGVNNFDFFGGALPTDFVISRYEVIKENSFVYVDYWDDSQAFRNMMYVRSLAADLNSVMCTGGVYEFSLPVGQWPAMTGGAVSLRAAGVTLSTQFTDFVSLNSLRFRFRLSVEEPSFSITRTRVSGLYGLPAANPNNGREYYEVAGRFSLISLVPSNDDHQTPIMNSVTVRQDLERQLSELRDEFNALSQEIAMSQLIDLALLPLDMFSMFSGIKATFDAVKSMATSVMKKFKKSGLASSVSTLTDSLSDAASSMSRSGSIRSISSNSSVWTDVSSTLYDLPSYMSTVSTQTATISKRLRLKEITAQTEGMNFDDISAAVLKTKIDRSAQITPNTLPDIVTEASEKFIPNRSYRILNNNEAFETSTDGRFFAYRVDTFEEIPFDVQKFADLVTDLPVISAIIDFKTLKNLNDNYGITREQAFNLIRSDPRVLREFINQDNPIIRNRIEQLIMQCRL</sequence>
<comment type="function">
    <molecule>Outer capsid protein VP4</molecule>
    <text evidence="1">Spike-forming protein that mediates virion attachment to the host epithelial cell receptors and plays a major role in cell penetration, determination of host range restriction and virulence. Rotavirus attachment and entry into the host cell probably involves multiple sequential contacts between the outer capsid proteins VP4 and VP7, and the cell receptors. It is subsequently lost, together with VP7, following virus entry into the host cell. Following entry into the host cell, low intracellular or intravesicular Ca(2+) concentration probably causes the calcium-stabilized VP7 trimers to dissociate from the virion. This step is probably necessary for the membrane-disrupting entry step and the release of VP4, which is locked onto the virion by VP7. During the virus exit from the host cell, VP4 seems to be required to target the newly formed virions to the host cell lipid rafts.</text>
</comment>
<comment type="function">
    <molecule>Outer capsid protein VP5*</molecule>
    <text evidence="1">Forms the spike 'foot' and 'body' and acts as a membrane permeabilization protein that mediates release of viral particles from endosomal compartments into the cytoplasm. During entry, the part of VP5* that protrudes from the virus folds back on itself and reorganizes from a local dimer to a trimer. This reorganization may be linked to membrane penetration by exposing VP5* hydrophobic region. In integrin-dependent strains, VP5* targets the integrin heterodimer ITGA2/ITGB1 for cell attachment.</text>
</comment>
<comment type="function">
    <molecule>Outer capsid protein VP8*</molecule>
    <text evidence="1">Forms the head of the spikes and mediates the recognition of specific host cell surface glycans. It is the viral hemagglutinin and an important target of neutralizing antibodies. In sialic acid-dependent strains, VP8* binds to host cell sialic acid, most probably a ganglioside, providing the initial contact. In some other strains, VP8* mediates the attachment to histo-blood group antigens (HBGAs) for viral entry.</text>
</comment>
<comment type="subunit">
    <molecule>Outer capsid protein VP4</molecule>
    <text evidence="1">Homotrimer. VP4 adopts a dimeric appearance above the capsid surface, while forming a trimeric base anchored inside the capsid layer. Only hints of the third molecule are observed above the capsid surface. It probably performs a series of molecular rearrangements during viral entry. Prior to trypsin cleavage, it is flexible. The priming trypsin cleavage triggers its rearrangement into rigid spikes with approximate two-fold symmetry of their protruding parts. After an unknown second triggering event, cleaved VP4 may undergo another rearrangement, in which two VP5* subunits fold back on themselves and join a third subunit to form a tightly associated trimer, shaped like a folded umbrella. Interacts with VP6. Interacts with VP7.</text>
</comment>
<comment type="subunit">
    <molecule>Outer capsid protein VP5*</molecule>
    <text evidence="1">Homotrimer. The trimer is coiled-coil stabilized by its C-terminus, however, its N-terminus, known as antigen domain or 'body', seems to be flexible allowing it to self-associate either as a dimer or a trimer.</text>
</comment>
<comment type="subcellular location">
    <molecule>Outer capsid protein VP4</molecule>
    <subcellularLocation>
        <location evidence="1">Virion</location>
    </subcellularLocation>
    <subcellularLocation>
        <location evidence="1">Host rough endoplasmic reticulum</location>
    </subcellularLocation>
    <subcellularLocation>
        <location evidence="1">Host cell membrane</location>
    </subcellularLocation>
    <subcellularLocation>
        <location evidence="1">Host cytoplasm</location>
        <location evidence="1">Host cytoskeleton</location>
    </subcellularLocation>
    <subcellularLocation>
        <location evidence="1">Host endoplasmic reticulum-Golgi intermediate compartment</location>
    </subcellularLocation>
    <text evidence="1">The outer layer contains 180 copies of VP4, grouped as 60 dimers. Immature double-layered particles assembled in the cytoplasm bud across the membrane of the endoplasmic reticulum, acquiring during this process a transient lipid membrane that is modified with the ER resident viral glycoproteins NSP4 and VP7; these enveloped particles also contain VP4. As the particles move towards the interior of the ER cisternae, the transient lipid membrane and the non-structural protein NSP4 are lost, while the virus surface proteins VP4 and VP7 rearrange to form the outermost virus protein layer, yielding mature infectious triple-layered particles. VP4 also seems to associate with lipid rafts of the host cell membrane probably for the exit of the virus from the infected cell by an alternate pathway.</text>
</comment>
<comment type="subcellular location">
    <molecule>Outer capsid protein VP8*</molecule>
    <subcellularLocation>
        <location evidence="1">Virion</location>
    </subcellularLocation>
    <text evidence="1">Outer capsid protein.</text>
</comment>
<comment type="subcellular location">
    <molecule>Outer capsid protein VP5*</molecule>
    <subcellularLocation>
        <location evidence="1">Virion</location>
    </subcellularLocation>
    <text evidence="1">Outer capsid protein.</text>
</comment>
<comment type="domain">
    <molecule>Outer capsid protein VP4</molecule>
    <text evidence="1">The VP4 spike is divided into a foot, a stalk and body, and a head.</text>
</comment>
<comment type="PTM">
    <molecule>Outer capsid protein VP4</molecule>
    <text evidence="1">Proteolytic cleavage by trypsin results in activation of VP4 functions and greatly increases infectivity. The penetration into the host cell is dependent on trypsin treatment of VP4. It produces two peptides, VP5* and VP8* that remain associated with the virion. Cleavage of VP4 by trypsin probably occurs in vivo in the lumen of the intestine prior to infection of enterocytes. Trypsin seems to be incorporated into the three-layered viral particles but remains inactive as long as the viral outer capsid is intact and would only be activated upon the solubilization of the latter.</text>
</comment>
<comment type="miscellaneous">
    <text evidence="1">In group A rotaviruses, VP4 defines the P serotype.</text>
</comment>
<comment type="miscellaneous">
    <text evidence="1">Some rotavirus strains are neuraminidase-sensitive and require sialic acid to attach to the cell surface. Some rotavirus strains are integrin-dependent. Some rotavirus strains depend on ganglioside for their entry into the host cell. Hsp70 also seems to be involved in the entry of some strains.</text>
</comment>
<comment type="similarity">
    <text evidence="1">Belongs to the rotavirus VP4 family.</text>
</comment>
<accession>Q83445</accession>
<organismHost>
    <name type="scientific">Mus musculus musculus</name>
    <name type="common">eastern European house mouse</name>
    <dbReference type="NCBI Taxonomy" id="39442"/>
</organismHost>